<keyword id="KW-0066">ATP synthesis</keyword>
<keyword id="KW-0067">ATP-binding</keyword>
<keyword id="KW-1003">Cell membrane</keyword>
<keyword id="KW-0139">CF(1)</keyword>
<keyword id="KW-0375">Hydrogen ion transport</keyword>
<keyword id="KW-0406">Ion transport</keyword>
<keyword id="KW-0472">Membrane</keyword>
<keyword id="KW-0547">Nucleotide-binding</keyword>
<keyword id="KW-1278">Translocase</keyword>
<keyword id="KW-0813">Transport</keyword>
<evidence type="ECO:0000255" key="1">
    <source>
        <dbReference type="HAMAP-Rule" id="MF_01346"/>
    </source>
</evidence>
<proteinExistence type="inferred from homology"/>
<sequence length="501" mass="54593">MAINAQEISALIKKQIENFQPNFDVTETGVVTYIGDGIARARGLDNAMSGELLEFSNGVFGMAQNLESNDVGIIILGDFYTIREGDEVKRTGKIMEVPVGEALIGRVVNPLGQPIDGLGDIKTTATRPVEAPAPGVMQRKSVSEPLQTGLKAVDALVPIGRGQRELIIGDRQTGKTSVAIDAILNQKGQDVICIYVAIGQKESTVRTQVESLRKHGALDYTIVVTASASQPSPLLYIAPYAGVAMAEEFMYNGKHVLIVYDDLSKQAVAYRELSLLLRRPPGREAYPGDVFYLHSRLLERSAKLSDDLGGGSITALPIIQTQAGDISAYIATNVISITDGQIFLQENLFNSGIRPAIDAGSSVSRVGGSAQIKAMKKVAGTLRLDLASYRELEAFTQFGSDLDAATQAKLNRGRRTVEVLKQPLHKPLPVEKQVLILYALTHGFLDSVPVDQILDFEEALYDYFDSHHEDIFETIRSTKDLPEEAVLNEAIQAFKDQSEYK</sequence>
<dbReference type="EC" id="7.1.2.2" evidence="1"/>
<dbReference type="EMBL" id="CP000419">
    <property type="protein sequence ID" value="ABJ65797.1"/>
    <property type="molecule type" value="Genomic_DNA"/>
</dbReference>
<dbReference type="RefSeq" id="WP_011225596.1">
    <property type="nucleotide sequence ID" value="NC_008532.1"/>
</dbReference>
<dbReference type="SMR" id="Q03LX5"/>
<dbReference type="GeneID" id="66898392"/>
<dbReference type="KEGG" id="ste:STER_0519"/>
<dbReference type="HOGENOM" id="CLU_010091_2_1_9"/>
<dbReference type="GO" id="GO:0005886">
    <property type="term" value="C:plasma membrane"/>
    <property type="evidence" value="ECO:0007669"/>
    <property type="project" value="UniProtKB-SubCell"/>
</dbReference>
<dbReference type="GO" id="GO:0045259">
    <property type="term" value="C:proton-transporting ATP synthase complex"/>
    <property type="evidence" value="ECO:0007669"/>
    <property type="project" value="UniProtKB-KW"/>
</dbReference>
<dbReference type="GO" id="GO:0043531">
    <property type="term" value="F:ADP binding"/>
    <property type="evidence" value="ECO:0007669"/>
    <property type="project" value="TreeGrafter"/>
</dbReference>
<dbReference type="GO" id="GO:0005524">
    <property type="term" value="F:ATP binding"/>
    <property type="evidence" value="ECO:0007669"/>
    <property type="project" value="UniProtKB-UniRule"/>
</dbReference>
<dbReference type="GO" id="GO:0046933">
    <property type="term" value="F:proton-transporting ATP synthase activity, rotational mechanism"/>
    <property type="evidence" value="ECO:0007669"/>
    <property type="project" value="UniProtKB-UniRule"/>
</dbReference>
<dbReference type="CDD" id="cd18113">
    <property type="entry name" value="ATP-synt_F1_alpha_C"/>
    <property type="match status" value="1"/>
</dbReference>
<dbReference type="CDD" id="cd18116">
    <property type="entry name" value="ATP-synt_F1_alpha_N"/>
    <property type="match status" value="1"/>
</dbReference>
<dbReference type="CDD" id="cd01132">
    <property type="entry name" value="F1-ATPase_alpha_CD"/>
    <property type="match status" value="1"/>
</dbReference>
<dbReference type="FunFam" id="1.20.150.20:FF:000001">
    <property type="entry name" value="ATP synthase subunit alpha"/>
    <property type="match status" value="1"/>
</dbReference>
<dbReference type="FunFam" id="2.40.30.20:FF:000001">
    <property type="entry name" value="ATP synthase subunit alpha"/>
    <property type="match status" value="1"/>
</dbReference>
<dbReference type="FunFam" id="3.40.50.300:FF:000002">
    <property type="entry name" value="ATP synthase subunit alpha"/>
    <property type="match status" value="1"/>
</dbReference>
<dbReference type="Gene3D" id="2.40.30.20">
    <property type="match status" value="1"/>
</dbReference>
<dbReference type="Gene3D" id="1.20.150.20">
    <property type="entry name" value="ATP synthase alpha/beta chain, C-terminal domain"/>
    <property type="match status" value="1"/>
</dbReference>
<dbReference type="Gene3D" id="3.40.50.300">
    <property type="entry name" value="P-loop containing nucleotide triphosphate hydrolases"/>
    <property type="match status" value="1"/>
</dbReference>
<dbReference type="HAMAP" id="MF_01346">
    <property type="entry name" value="ATP_synth_alpha_bact"/>
    <property type="match status" value="1"/>
</dbReference>
<dbReference type="InterPro" id="IPR023366">
    <property type="entry name" value="ATP_synth_asu-like_sf"/>
</dbReference>
<dbReference type="InterPro" id="IPR000793">
    <property type="entry name" value="ATP_synth_asu_C"/>
</dbReference>
<dbReference type="InterPro" id="IPR038376">
    <property type="entry name" value="ATP_synth_asu_C_sf"/>
</dbReference>
<dbReference type="InterPro" id="IPR033732">
    <property type="entry name" value="ATP_synth_F1_a_nt-bd_dom"/>
</dbReference>
<dbReference type="InterPro" id="IPR005294">
    <property type="entry name" value="ATP_synth_F1_asu"/>
</dbReference>
<dbReference type="InterPro" id="IPR004100">
    <property type="entry name" value="ATPase_F1/V1/A1_a/bsu_N"/>
</dbReference>
<dbReference type="InterPro" id="IPR036121">
    <property type="entry name" value="ATPase_F1/V1/A1_a/bsu_N_sf"/>
</dbReference>
<dbReference type="InterPro" id="IPR000194">
    <property type="entry name" value="ATPase_F1/V1/A1_a/bsu_nucl-bd"/>
</dbReference>
<dbReference type="InterPro" id="IPR027417">
    <property type="entry name" value="P-loop_NTPase"/>
</dbReference>
<dbReference type="NCBIfam" id="TIGR00962">
    <property type="entry name" value="atpA"/>
    <property type="match status" value="1"/>
</dbReference>
<dbReference type="NCBIfam" id="NF009884">
    <property type="entry name" value="PRK13343.1"/>
    <property type="match status" value="1"/>
</dbReference>
<dbReference type="PANTHER" id="PTHR48082">
    <property type="entry name" value="ATP SYNTHASE SUBUNIT ALPHA, MITOCHONDRIAL"/>
    <property type="match status" value="1"/>
</dbReference>
<dbReference type="PANTHER" id="PTHR48082:SF2">
    <property type="entry name" value="ATP SYNTHASE SUBUNIT ALPHA, MITOCHONDRIAL"/>
    <property type="match status" value="1"/>
</dbReference>
<dbReference type="Pfam" id="PF00006">
    <property type="entry name" value="ATP-synt_ab"/>
    <property type="match status" value="1"/>
</dbReference>
<dbReference type="Pfam" id="PF00306">
    <property type="entry name" value="ATP-synt_ab_C"/>
    <property type="match status" value="1"/>
</dbReference>
<dbReference type="Pfam" id="PF02874">
    <property type="entry name" value="ATP-synt_ab_N"/>
    <property type="match status" value="1"/>
</dbReference>
<dbReference type="PIRSF" id="PIRSF039088">
    <property type="entry name" value="F_ATPase_subunit_alpha"/>
    <property type="match status" value="1"/>
</dbReference>
<dbReference type="SUPFAM" id="SSF47917">
    <property type="entry name" value="C-terminal domain of alpha and beta subunits of F1 ATP synthase"/>
    <property type="match status" value="1"/>
</dbReference>
<dbReference type="SUPFAM" id="SSF50615">
    <property type="entry name" value="N-terminal domain of alpha and beta subunits of F1 ATP synthase"/>
    <property type="match status" value="1"/>
</dbReference>
<dbReference type="SUPFAM" id="SSF52540">
    <property type="entry name" value="P-loop containing nucleoside triphosphate hydrolases"/>
    <property type="match status" value="1"/>
</dbReference>
<accession>Q03LX5</accession>
<organism>
    <name type="scientific">Streptococcus thermophilus (strain ATCC BAA-491 / LMD-9)</name>
    <dbReference type="NCBI Taxonomy" id="322159"/>
    <lineage>
        <taxon>Bacteria</taxon>
        <taxon>Bacillati</taxon>
        <taxon>Bacillota</taxon>
        <taxon>Bacilli</taxon>
        <taxon>Lactobacillales</taxon>
        <taxon>Streptococcaceae</taxon>
        <taxon>Streptococcus</taxon>
    </lineage>
</organism>
<gene>
    <name evidence="1" type="primary">atpA</name>
    <name type="ordered locus">STER_0519</name>
</gene>
<feature type="chain" id="PRO_0000302707" description="ATP synthase subunit alpha">
    <location>
        <begin position="1"/>
        <end position="501"/>
    </location>
</feature>
<feature type="binding site" evidence="1">
    <location>
        <begin position="169"/>
        <end position="176"/>
    </location>
    <ligand>
        <name>ATP</name>
        <dbReference type="ChEBI" id="CHEBI:30616"/>
    </ligand>
</feature>
<feature type="site" description="Required for activity" evidence="1">
    <location>
        <position position="362"/>
    </location>
</feature>
<reference key="1">
    <citation type="journal article" date="2006" name="Proc. Natl. Acad. Sci. U.S.A.">
        <title>Comparative genomics of the lactic acid bacteria.</title>
        <authorList>
            <person name="Makarova K.S."/>
            <person name="Slesarev A."/>
            <person name="Wolf Y.I."/>
            <person name="Sorokin A."/>
            <person name="Mirkin B."/>
            <person name="Koonin E.V."/>
            <person name="Pavlov A."/>
            <person name="Pavlova N."/>
            <person name="Karamychev V."/>
            <person name="Polouchine N."/>
            <person name="Shakhova V."/>
            <person name="Grigoriev I."/>
            <person name="Lou Y."/>
            <person name="Rohksar D."/>
            <person name="Lucas S."/>
            <person name="Huang K."/>
            <person name="Goodstein D.M."/>
            <person name="Hawkins T."/>
            <person name="Plengvidhya V."/>
            <person name="Welker D."/>
            <person name="Hughes J."/>
            <person name="Goh Y."/>
            <person name="Benson A."/>
            <person name="Baldwin K."/>
            <person name="Lee J.-H."/>
            <person name="Diaz-Muniz I."/>
            <person name="Dosti B."/>
            <person name="Smeianov V."/>
            <person name="Wechter W."/>
            <person name="Barabote R."/>
            <person name="Lorca G."/>
            <person name="Altermann E."/>
            <person name="Barrangou R."/>
            <person name="Ganesan B."/>
            <person name="Xie Y."/>
            <person name="Rawsthorne H."/>
            <person name="Tamir D."/>
            <person name="Parker C."/>
            <person name="Breidt F."/>
            <person name="Broadbent J.R."/>
            <person name="Hutkins R."/>
            <person name="O'Sullivan D."/>
            <person name="Steele J."/>
            <person name="Unlu G."/>
            <person name="Saier M.H. Jr."/>
            <person name="Klaenhammer T."/>
            <person name="Richardson P."/>
            <person name="Kozyavkin S."/>
            <person name="Weimer B.C."/>
            <person name="Mills D.A."/>
        </authorList>
    </citation>
    <scope>NUCLEOTIDE SEQUENCE [LARGE SCALE GENOMIC DNA]</scope>
    <source>
        <strain>ATCC BAA-491 / LMD-9</strain>
    </source>
</reference>
<protein>
    <recommendedName>
        <fullName evidence="1">ATP synthase subunit alpha</fullName>
        <ecNumber evidence="1">7.1.2.2</ecNumber>
    </recommendedName>
    <alternativeName>
        <fullName evidence="1">ATP synthase F1 sector subunit alpha</fullName>
    </alternativeName>
    <alternativeName>
        <fullName evidence="1">F-ATPase subunit alpha</fullName>
    </alternativeName>
</protein>
<name>ATPA_STRTD</name>
<comment type="function">
    <text evidence="1">Produces ATP from ADP in the presence of a proton gradient across the membrane. The alpha chain is a regulatory subunit.</text>
</comment>
<comment type="catalytic activity">
    <reaction evidence="1">
        <text>ATP + H2O + 4 H(+)(in) = ADP + phosphate + 5 H(+)(out)</text>
        <dbReference type="Rhea" id="RHEA:57720"/>
        <dbReference type="ChEBI" id="CHEBI:15377"/>
        <dbReference type="ChEBI" id="CHEBI:15378"/>
        <dbReference type="ChEBI" id="CHEBI:30616"/>
        <dbReference type="ChEBI" id="CHEBI:43474"/>
        <dbReference type="ChEBI" id="CHEBI:456216"/>
        <dbReference type="EC" id="7.1.2.2"/>
    </reaction>
</comment>
<comment type="subunit">
    <text evidence="1">F-type ATPases have 2 components, CF(1) - the catalytic core - and CF(0) - the membrane proton channel. CF(1) has five subunits: alpha(3), beta(3), gamma(1), delta(1), epsilon(1). CF(0) has three main subunits: a(1), b(2) and c(9-12). The alpha and beta chains form an alternating ring which encloses part of the gamma chain. CF(1) is attached to CF(0) by a central stalk formed by the gamma and epsilon chains, while a peripheral stalk is formed by the delta and b chains.</text>
</comment>
<comment type="subcellular location">
    <subcellularLocation>
        <location evidence="1">Cell membrane</location>
        <topology evidence="1">Peripheral membrane protein</topology>
    </subcellularLocation>
</comment>
<comment type="similarity">
    <text evidence="1">Belongs to the ATPase alpha/beta chains family.</text>
</comment>